<evidence type="ECO:0000250" key="1"/>
<evidence type="ECO:0000250" key="2">
    <source>
        <dbReference type="UniProtKB" id="A0FGR8"/>
    </source>
</evidence>
<evidence type="ECO:0000255" key="3"/>
<evidence type="ECO:0000255" key="4">
    <source>
        <dbReference type="PROSITE-ProRule" id="PRU00041"/>
    </source>
</evidence>
<evidence type="ECO:0000255" key="5">
    <source>
        <dbReference type="PROSITE-ProRule" id="PRU01194"/>
    </source>
</evidence>
<evidence type="ECO:0000256" key="6">
    <source>
        <dbReference type="SAM" id="MobiDB-lite"/>
    </source>
</evidence>
<evidence type="ECO:0000269" key="7">
    <source>
    </source>
</evidence>
<evidence type="ECO:0000269" key="8">
    <source>
    </source>
</evidence>
<evidence type="ECO:0000269" key="9">
    <source>
    </source>
</evidence>
<evidence type="ECO:0000269" key="10">
    <source>
    </source>
</evidence>
<evidence type="ECO:0000269" key="11">
    <source>
    </source>
</evidence>
<evidence type="ECO:0000303" key="12">
    <source>
    </source>
</evidence>
<evidence type="ECO:0000303" key="13">
    <source>
    </source>
</evidence>
<evidence type="ECO:0000303" key="14">
    <source>
    </source>
</evidence>
<evidence type="ECO:0000305" key="15"/>
<evidence type="ECO:0000312" key="16">
    <source>
        <dbReference type="HGNC" id="HGNC:24295"/>
    </source>
</evidence>
<sequence>MRAEEPCAPGAPSALGAQRTPGPELRLSSQLLPELCTFVVRVLFYLGPVYLAGYLGLSITWLLLGALLWMWWRRNRRGKLGRLAAAFEFLDNEREFISRELRGQHLPAWIHFPDVERVEWANKIISQTWPYLSMIMESKFREKLEPKIREKSIHLRTFTFTKLYFGQKCPRVNGVKAHTNTCNRRRVTVDLQICYIGDCEISVELQKIQAGVNGIQLQGTLRVILEPLLVDKPFVGAVTVFFLQKPHLQINWTGLTNLLDAPGINDVSDSLLEDLIATHLVLPNRVTVPVKKGLDLTNLRFPLPCGVIRVHLLEAEQLAQKDNFLGLRGKSDPYAKVSIGLQHFRSRTIYRNLNPTWNEVFEFMVYEVPGQDLEVDLYDEDTDRDDFLGSLQICLGDVMTNRVVDEWFVLNDTTSGRLHLRLEWLSLLTDQEVLTEDHGGLSTAILVVFLESACNLPRNPFDYLNGEYRAKKLSRFARNKVSKDPSSYVKLSVGKKTHTSKTCPHNKDPVWSQVFSFFVHNVATERLHLKVLDDDQECALGMLEVPLCQILPYADLTLEQRFQLDHSGLDSLISMRLVLRFLQVEERELGSPYTGPEALKKGPLLIKKVATNQGPKAQPQEEGPTDLPCPPDPASDTKDVSRSTTTTTSATTVATEPTSQETGPEPKGKDSAKRFCEPIGEKKSPATIFLTVPGPHSPGPIKSPRPMKCPASPFAWPPKRLAPSMSSLNSLASSCFDLADISLNIEGGDLRRRQLGEIQLTVRYVCLRRCLSVLINGCRNLTPCTSSGADPYVRVYLLPERKWACRKKTSVKRKTLEPLFDETFEFFVPMEEVKKRSLDVAVKNSRPLGSHRRKELGKVLIDLSKEDLIKGFSQWYELTPNGQPRS</sequence>
<name>ESYT3_HUMAN</name>
<gene>
    <name evidence="16" type="primary">ESYT3</name>
    <name type="synonym">FAM62C</name>
</gene>
<organism>
    <name type="scientific">Homo sapiens</name>
    <name type="common">Human</name>
    <dbReference type="NCBI Taxonomy" id="9606"/>
    <lineage>
        <taxon>Eukaryota</taxon>
        <taxon>Metazoa</taxon>
        <taxon>Chordata</taxon>
        <taxon>Craniata</taxon>
        <taxon>Vertebrata</taxon>
        <taxon>Euteleostomi</taxon>
        <taxon>Mammalia</taxon>
        <taxon>Eutheria</taxon>
        <taxon>Euarchontoglires</taxon>
        <taxon>Primates</taxon>
        <taxon>Haplorrhini</taxon>
        <taxon>Catarrhini</taxon>
        <taxon>Hominidae</taxon>
        <taxon>Homo</taxon>
    </lineage>
</organism>
<reference key="1">
    <citation type="journal article" date="2007" name="Proc. Natl. Acad. Sci. U.S.A.">
        <title>E-Syts, a family of membranous Ca2+-sensor proteins with multiple C2 domains.</title>
        <authorList>
            <person name="Min S.-W."/>
            <person name="Chang W.-P."/>
            <person name="Suedhof T.C."/>
        </authorList>
    </citation>
    <scope>NUCLEOTIDE SEQUENCE [MRNA] (ISOFORM 1)</scope>
    <scope>SUBCELLULAR LOCATION</scope>
    <scope>TISSUE SPECIFICITY</scope>
</reference>
<reference key="2">
    <citation type="journal article" date="2004" name="Nat. Genet.">
        <title>Complete sequencing and characterization of 21,243 full-length human cDNAs.</title>
        <authorList>
            <person name="Ota T."/>
            <person name="Suzuki Y."/>
            <person name="Nishikawa T."/>
            <person name="Otsuki T."/>
            <person name="Sugiyama T."/>
            <person name="Irie R."/>
            <person name="Wakamatsu A."/>
            <person name="Hayashi K."/>
            <person name="Sato H."/>
            <person name="Nagai K."/>
            <person name="Kimura K."/>
            <person name="Makita H."/>
            <person name="Sekine M."/>
            <person name="Obayashi M."/>
            <person name="Nishi T."/>
            <person name="Shibahara T."/>
            <person name="Tanaka T."/>
            <person name="Ishii S."/>
            <person name="Yamamoto J."/>
            <person name="Saito K."/>
            <person name="Kawai Y."/>
            <person name="Isono Y."/>
            <person name="Nakamura Y."/>
            <person name="Nagahari K."/>
            <person name="Murakami K."/>
            <person name="Yasuda T."/>
            <person name="Iwayanagi T."/>
            <person name="Wagatsuma M."/>
            <person name="Shiratori A."/>
            <person name="Sudo H."/>
            <person name="Hosoiri T."/>
            <person name="Kaku Y."/>
            <person name="Kodaira H."/>
            <person name="Kondo H."/>
            <person name="Sugawara M."/>
            <person name="Takahashi M."/>
            <person name="Kanda K."/>
            <person name="Yokoi T."/>
            <person name="Furuya T."/>
            <person name="Kikkawa E."/>
            <person name="Omura Y."/>
            <person name="Abe K."/>
            <person name="Kamihara K."/>
            <person name="Katsuta N."/>
            <person name="Sato K."/>
            <person name="Tanikawa M."/>
            <person name="Yamazaki M."/>
            <person name="Ninomiya K."/>
            <person name="Ishibashi T."/>
            <person name="Yamashita H."/>
            <person name="Murakawa K."/>
            <person name="Fujimori K."/>
            <person name="Tanai H."/>
            <person name="Kimata M."/>
            <person name="Watanabe M."/>
            <person name="Hiraoka S."/>
            <person name="Chiba Y."/>
            <person name="Ishida S."/>
            <person name="Ono Y."/>
            <person name="Takiguchi S."/>
            <person name="Watanabe S."/>
            <person name="Yosida M."/>
            <person name="Hotuta T."/>
            <person name="Kusano J."/>
            <person name="Kanehori K."/>
            <person name="Takahashi-Fujii A."/>
            <person name="Hara H."/>
            <person name="Tanase T.-O."/>
            <person name="Nomura Y."/>
            <person name="Togiya S."/>
            <person name="Komai F."/>
            <person name="Hara R."/>
            <person name="Takeuchi K."/>
            <person name="Arita M."/>
            <person name="Imose N."/>
            <person name="Musashino K."/>
            <person name="Yuuki H."/>
            <person name="Oshima A."/>
            <person name="Sasaki N."/>
            <person name="Aotsuka S."/>
            <person name="Yoshikawa Y."/>
            <person name="Matsunawa H."/>
            <person name="Ichihara T."/>
            <person name="Shiohata N."/>
            <person name="Sano S."/>
            <person name="Moriya S."/>
            <person name="Momiyama H."/>
            <person name="Satoh N."/>
            <person name="Takami S."/>
            <person name="Terashima Y."/>
            <person name="Suzuki O."/>
            <person name="Nakagawa S."/>
            <person name="Senoh A."/>
            <person name="Mizoguchi H."/>
            <person name="Goto Y."/>
            <person name="Shimizu F."/>
            <person name="Wakebe H."/>
            <person name="Hishigaki H."/>
            <person name="Watanabe T."/>
            <person name="Sugiyama A."/>
            <person name="Takemoto M."/>
            <person name="Kawakami B."/>
            <person name="Yamazaki M."/>
            <person name="Watanabe K."/>
            <person name="Kumagai A."/>
            <person name="Itakura S."/>
            <person name="Fukuzumi Y."/>
            <person name="Fujimori Y."/>
            <person name="Komiyama M."/>
            <person name="Tashiro H."/>
            <person name="Tanigami A."/>
            <person name="Fujiwara T."/>
            <person name="Ono T."/>
            <person name="Yamada K."/>
            <person name="Fujii Y."/>
            <person name="Ozaki K."/>
            <person name="Hirao M."/>
            <person name="Ohmori Y."/>
            <person name="Kawabata A."/>
            <person name="Hikiji T."/>
            <person name="Kobatake N."/>
            <person name="Inagaki H."/>
            <person name="Ikema Y."/>
            <person name="Okamoto S."/>
            <person name="Okitani R."/>
            <person name="Kawakami T."/>
            <person name="Noguchi S."/>
            <person name="Itoh T."/>
            <person name="Shigeta K."/>
            <person name="Senba T."/>
            <person name="Matsumura K."/>
            <person name="Nakajima Y."/>
            <person name="Mizuno T."/>
            <person name="Morinaga M."/>
            <person name="Sasaki M."/>
            <person name="Togashi T."/>
            <person name="Oyama M."/>
            <person name="Hata H."/>
            <person name="Watanabe M."/>
            <person name="Komatsu T."/>
            <person name="Mizushima-Sugano J."/>
            <person name="Satoh T."/>
            <person name="Shirai Y."/>
            <person name="Takahashi Y."/>
            <person name="Nakagawa K."/>
            <person name="Okumura K."/>
            <person name="Nagase T."/>
            <person name="Nomura N."/>
            <person name="Kikuchi H."/>
            <person name="Masuho Y."/>
            <person name="Yamashita R."/>
            <person name="Nakai K."/>
            <person name="Yada T."/>
            <person name="Nakamura Y."/>
            <person name="Ohara O."/>
            <person name="Isogai T."/>
            <person name="Sugano S."/>
        </authorList>
    </citation>
    <scope>NUCLEOTIDE SEQUENCE [LARGE SCALE MRNA] (ISOFORM 2)</scope>
    <source>
        <tissue>Cerebellum</tissue>
        <tissue>Colon</tissue>
    </source>
</reference>
<reference key="3">
    <citation type="journal article" date="2004" name="Genome Res.">
        <title>The status, quality, and expansion of the NIH full-length cDNA project: the Mammalian Gene Collection (MGC).</title>
        <authorList>
            <consortium name="The MGC Project Team"/>
        </authorList>
    </citation>
    <scope>NUCLEOTIDE SEQUENCE [LARGE SCALE MRNA] (ISOFORM 2)</scope>
    <scope>VARIANT GLN-246</scope>
    <source>
        <tissue>Testis</tissue>
    </source>
</reference>
<reference key="4">
    <citation type="journal article" date="2001" name="Genomics">
        <title>Genomic analysis of synaptotagmin genes.</title>
        <authorList>
            <person name="Craxton M.A."/>
        </authorList>
    </citation>
    <scope>NUCLEOTIDE SEQUENCE [MRNA] OF 780-823 (ISOFORM 1)</scope>
    <source>
        <tissue>Brain</tissue>
    </source>
</reference>
<reference key="5">
    <citation type="journal article" date="2013" name="Cell">
        <title>PI(4,5)P(2)-dependent and Ca(2+)-regulated ER-PM interactions mediated by the extended synaptotagmins.</title>
        <authorList>
            <person name="Giordano F."/>
            <person name="Saheki Y."/>
            <person name="Idevall-Hagren O."/>
            <person name="Colombo S.F."/>
            <person name="Pirruccello M."/>
            <person name="Milosevic I."/>
            <person name="Gracheva E.O."/>
            <person name="Bagriantsev S.N."/>
            <person name="Borgese N."/>
            <person name="De Camilli P."/>
        </authorList>
    </citation>
    <scope>LIPID-BINDING</scope>
    <scope>FUNCTION</scope>
    <scope>SUBCELLULAR LOCATION</scope>
    <scope>TOPOLOGY</scope>
    <scope>INTERACTION WITH ESYT1 AND ESYT2</scope>
</reference>
<reference key="6">
    <citation type="journal article" date="2018" name="Cell">
        <title>Aster proteins facilitate nonvesicular plasma membrane to ER cholesterol transport in mammalian cells.</title>
        <authorList>
            <person name="Sandhu J."/>
            <person name="Li S."/>
            <person name="Fairall L."/>
            <person name="Pfisterer S.G."/>
            <person name="Gurnett J.E."/>
            <person name="Xiao X."/>
            <person name="Weston T.A."/>
            <person name="Vashi D."/>
            <person name="Ferrari A."/>
            <person name="Orozco J.L."/>
            <person name="Hartman C.L."/>
            <person name="Strugatsky D."/>
            <person name="Lee S.D."/>
            <person name="He C."/>
            <person name="Hong C."/>
            <person name="Jiang H."/>
            <person name="Bentolila L.A."/>
            <person name="Gatta A.T."/>
            <person name="Levine T.P."/>
            <person name="Ferng A."/>
            <person name="Lee R."/>
            <person name="Ford D.A."/>
            <person name="Young S.G."/>
            <person name="Ikonen E."/>
            <person name="Schwabe J.W.R."/>
            <person name="Tontonoz P."/>
        </authorList>
    </citation>
    <scope>SUBCELLULAR LOCATION</scope>
</reference>
<reference key="7">
    <citation type="journal article" date="2018" name="Elife">
        <title>GRAM domain proteins specialize functionally distinct ER-PM contact sites in human cells.</title>
        <authorList>
            <person name="Besprozvannaya M."/>
            <person name="Dickson E."/>
            <person name="Li H."/>
            <person name="Ginburg K.S."/>
            <person name="Bers D.M."/>
            <person name="Auwerx J."/>
            <person name="Nunnari J."/>
        </authorList>
    </citation>
    <scope>SUBCELLULAR LOCATION</scope>
</reference>
<keyword id="KW-0025">Alternative splicing</keyword>
<keyword id="KW-0106">Calcium</keyword>
<keyword id="KW-1003">Cell membrane</keyword>
<keyword id="KW-0256">Endoplasmic reticulum</keyword>
<keyword id="KW-0445">Lipid transport</keyword>
<keyword id="KW-0446">Lipid-binding</keyword>
<keyword id="KW-0472">Membrane</keyword>
<keyword id="KW-0479">Metal-binding</keyword>
<keyword id="KW-1267">Proteomics identification</keyword>
<keyword id="KW-1185">Reference proteome</keyword>
<keyword id="KW-0677">Repeat</keyword>
<keyword id="KW-0812">Transmembrane</keyword>
<keyword id="KW-1133">Transmembrane helix</keyword>
<keyword id="KW-0813">Transport</keyword>
<protein>
    <recommendedName>
        <fullName evidence="15">Extended synaptotagmin-3</fullName>
        <shortName evidence="14">E-Syt3</shortName>
    </recommendedName>
    <alternativeName>
        <fullName>Chr3Syt</fullName>
    </alternativeName>
</protein>
<comment type="function">
    <text evidence="1 9">Binds glycerophospholipids in a barrel-like domain and may play a role in cellular lipid transport (By similarity). Tethers the endoplasmic reticulum to the cell membrane and promotes the formation of appositions between the endoplasmic reticulum and the cell membrane.</text>
</comment>
<comment type="subunit">
    <text evidence="9">Interacts with ESYT1 and ESYT2.</text>
</comment>
<comment type="interaction">
    <interactant intactId="EBI-8771391">
        <id>A0FGR9</id>
    </interactant>
    <interactant intactId="EBI-355956">
        <id>Q9BSJ8</id>
        <label>ESYT1</label>
    </interactant>
    <organismsDiffer>false</organismsDiffer>
    <experiments>4</experiments>
</comment>
<comment type="interaction">
    <interactant intactId="EBI-8771391">
        <id>A0FGR9</id>
    </interactant>
    <interactant intactId="EBI-3184170">
        <id>A0FGR8</id>
        <label>ESYT2</label>
    </interactant>
    <organismsDiffer>false</organismsDiffer>
    <experiments>4</experiments>
</comment>
<comment type="subcellular location">
    <subcellularLocation>
        <location evidence="8 10">Cell membrane</location>
        <topology evidence="8">Peripheral membrane protein</topology>
    </subcellularLocation>
    <subcellularLocation>
        <location evidence="10">Endoplasmic reticulum membrane</location>
        <topology evidence="3">Multi-pass membrane protein</topology>
    </subcellularLocation>
    <text evidence="8 10 11">Localizes to endoplasmic reticulum-plasma membrane contact sites (EPCS) (PubMed:29469807, PubMed:30220461). Recruited to the cell membrane via the third C2 domain.</text>
</comment>
<comment type="alternative products">
    <event type="alternative splicing"/>
    <isoform>
        <id>A0FGR9-1</id>
        <name>1</name>
        <sequence type="displayed"/>
    </isoform>
    <isoform>
        <id>A0FGR9-2</id>
        <name>2</name>
        <sequence type="described" ref="VSP_030424 VSP_030425"/>
    </isoform>
</comment>
<comment type="tissue specificity">
    <text evidence="8">Widely expressed with high level in cerebellum and skin.</text>
</comment>
<comment type="domain">
    <text evidence="9">Anchored to the endoplasmic reticulum membrane by a transmembrane hairpin structure; both N-terminus and C-terminus are cytoplasmic.</text>
</comment>
<comment type="domain">
    <text evidence="1 9">The C2 domains mediate lipid and calcium binding. The N-terminal C2 domain binds calcium ions and is important for calcium-dependent lipid binding and interaction with membranes. Two calcium ions are bound at a high-affinity site and a third calcium ion is bound with lower affinity. May bind up to four calcium ions. In contrast, the second C2 domain apparently does not bind calcium (By similarity). The third C2 domain mediates interaction with membranes enriched in phosphatidylinositol 4,5-bisphosphate and is required for location at the cell membrane (PubMed:23791178).</text>
</comment>
<comment type="domain">
    <text evidence="2">The SMP-LTD domain is a barrel-like domain that binds glycerophospholipids in its interior (By similarity).</text>
</comment>
<comment type="similarity">
    <text evidence="15">Belongs to the extended synaptotagmin family.</text>
</comment>
<accession>A0FGR9</accession>
<accession>A8K0G5</accession>
<accession>Q6ZV21</accession>
<accession>Q8NDZ5</accession>
<accession>Q9BQR9</accession>
<proteinExistence type="evidence at protein level"/>
<dbReference type="EMBL" id="DQ993202">
    <property type="protein sequence ID" value="ABJ97707.1"/>
    <property type="molecule type" value="mRNA"/>
</dbReference>
<dbReference type="EMBL" id="AK289530">
    <property type="protein sequence ID" value="BAF82219.1"/>
    <property type="molecule type" value="mRNA"/>
</dbReference>
<dbReference type="EMBL" id="BC037292">
    <property type="protein sequence ID" value="AAH37292.1"/>
    <property type="molecule type" value="mRNA"/>
</dbReference>
<dbReference type="EMBL" id="AJ303366">
    <property type="protein sequence ID" value="CAC33888.1"/>
    <property type="molecule type" value="mRNA"/>
</dbReference>
<dbReference type="CCDS" id="CCDS3101.2">
    <molecule id="A0FGR9-1"/>
</dbReference>
<dbReference type="RefSeq" id="NP_001309760.1">
    <molecule id="A0FGR9-1"/>
    <property type="nucleotide sequence ID" value="NM_001322831.2"/>
</dbReference>
<dbReference type="RefSeq" id="NP_114119.2">
    <molecule id="A0FGR9-1"/>
    <property type="nucleotide sequence ID" value="NM_031913.5"/>
</dbReference>
<dbReference type="RefSeq" id="XP_047305007.1">
    <molecule id="A0FGR9-2"/>
    <property type="nucleotide sequence ID" value="XM_047449051.1"/>
</dbReference>
<dbReference type="RefSeq" id="XP_047305008.1">
    <molecule id="A0FGR9-2"/>
    <property type="nucleotide sequence ID" value="XM_047449052.1"/>
</dbReference>
<dbReference type="RefSeq" id="XP_054204038.1">
    <molecule id="A0FGR9-2"/>
    <property type="nucleotide sequence ID" value="XM_054348063.1"/>
</dbReference>
<dbReference type="RefSeq" id="XP_054204039.1">
    <molecule id="A0FGR9-2"/>
    <property type="nucleotide sequence ID" value="XM_054348064.1"/>
</dbReference>
<dbReference type="SMR" id="A0FGR9"/>
<dbReference type="BioGRID" id="123766">
    <property type="interactions" value="5"/>
</dbReference>
<dbReference type="CORUM" id="A0FGR9"/>
<dbReference type="DIP" id="DIP-61998N"/>
<dbReference type="FunCoup" id="A0FGR9">
    <property type="interactions" value="339"/>
</dbReference>
<dbReference type="IntAct" id="A0FGR9">
    <property type="interactions" value="3"/>
</dbReference>
<dbReference type="STRING" id="9606.ENSP00000374218"/>
<dbReference type="TCDB" id="9.A.57.1.3">
    <property type="family name" value="the extended-synaptotagmin (e-syt) family"/>
</dbReference>
<dbReference type="iPTMnet" id="A0FGR9"/>
<dbReference type="PhosphoSitePlus" id="A0FGR9"/>
<dbReference type="BioMuta" id="ESYT3"/>
<dbReference type="jPOST" id="A0FGR9"/>
<dbReference type="MassIVE" id="A0FGR9"/>
<dbReference type="PaxDb" id="9606-ENSP00000374218"/>
<dbReference type="PeptideAtlas" id="A0FGR9"/>
<dbReference type="ProteomicsDB" id="35">
    <molecule id="A0FGR9-1"/>
</dbReference>
<dbReference type="Antibodypedia" id="33435">
    <property type="antibodies" value="58 antibodies from 14 providers"/>
</dbReference>
<dbReference type="DNASU" id="83850"/>
<dbReference type="Ensembl" id="ENST00000389567.9">
    <molecule id="A0FGR9-1"/>
    <property type="protein sequence ID" value="ENSP00000374218.4"/>
    <property type="gene ID" value="ENSG00000158220.14"/>
</dbReference>
<dbReference type="Ensembl" id="ENST00000490835.5">
    <molecule id="A0FGR9-2"/>
    <property type="protein sequence ID" value="ENSP00000417388.1"/>
    <property type="gene ID" value="ENSG00000158220.14"/>
</dbReference>
<dbReference type="GeneID" id="83850"/>
<dbReference type="KEGG" id="hsa:83850"/>
<dbReference type="MANE-Select" id="ENST00000389567.9">
    <property type="protein sequence ID" value="ENSP00000374218.4"/>
    <property type="RefSeq nucleotide sequence ID" value="NM_031913.5"/>
    <property type="RefSeq protein sequence ID" value="NP_114119.2"/>
</dbReference>
<dbReference type="UCSC" id="uc003esk.4">
    <molecule id="A0FGR9-1"/>
    <property type="organism name" value="human"/>
</dbReference>
<dbReference type="AGR" id="HGNC:24295"/>
<dbReference type="CTD" id="83850"/>
<dbReference type="DisGeNET" id="83850"/>
<dbReference type="GeneCards" id="ESYT3"/>
<dbReference type="HGNC" id="HGNC:24295">
    <property type="gene designation" value="ESYT3"/>
</dbReference>
<dbReference type="HPA" id="ENSG00000158220">
    <property type="expression patterns" value="Tissue enhanced (brain, skin)"/>
</dbReference>
<dbReference type="neXtProt" id="NX_A0FGR9"/>
<dbReference type="OpenTargets" id="ENSG00000158220"/>
<dbReference type="PharmGKB" id="PA165697118"/>
<dbReference type="VEuPathDB" id="HostDB:ENSG00000158220"/>
<dbReference type="eggNOG" id="KOG1012">
    <property type="taxonomic scope" value="Eukaryota"/>
</dbReference>
<dbReference type="GeneTree" id="ENSGT00940000161072"/>
<dbReference type="HOGENOM" id="CLU_012047_1_0_1"/>
<dbReference type="InParanoid" id="A0FGR9"/>
<dbReference type="OMA" id="WANKVIS"/>
<dbReference type="OrthoDB" id="1029639at2759"/>
<dbReference type="PAN-GO" id="A0FGR9">
    <property type="GO annotations" value="7 GO annotations based on evolutionary models"/>
</dbReference>
<dbReference type="PhylomeDB" id="A0FGR9"/>
<dbReference type="TreeFam" id="TF324255"/>
<dbReference type="PathwayCommons" id="A0FGR9"/>
<dbReference type="Reactome" id="R-HSA-9845576">
    <property type="pathway name" value="Glycosphingolipid transport"/>
</dbReference>
<dbReference type="SignaLink" id="A0FGR9"/>
<dbReference type="BioGRID-ORCS" id="83850">
    <property type="hits" value="13 hits in 1145 CRISPR screens"/>
</dbReference>
<dbReference type="CD-CODE" id="91857CE7">
    <property type="entry name" value="Nucleolus"/>
</dbReference>
<dbReference type="ChiTaRS" id="ESYT3">
    <property type="organism name" value="human"/>
</dbReference>
<dbReference type="GenomeRNAi" id="83850"/>
<dbReference type="Pharos" id="A0FGR9">
    <property type="development level" value="Tbio"/>
</dbReference>
<dbReference type="PRO" id="PR:A0FGR9"/>
<dbReference type="Proteomes" id="UP000005640">
    <property type="component" value="Chromosome 3"/>
</dbReference>
<dbReference type="RNAct" id="A0FGR9">
    <property type="molecule type" value="protein"/>
</dbReference>
<dbReference type="Bgee" id="ENSG00000158220">
    <property type="expression patterns" value="Expressed in right hemisphere of cerebellum and 105 other cell types or tissues"/>
</dbReference>
<dbReference type="ExpressionAtlas" id="A0FGR9">
    <property type="expression patterns" value="baseline and differential"/>
</dbReference>
<dbReference type="GO" id="GO:0009898">
    <property type="term" value="C:cytoplasmic side of plasma membrane"/>
    <property type="evidence" value="ECO:0000314"/>
    <property type="project" value="UniProtKB"/>
</dbReference>
<dbReference type="GO" id="GO:0005789">
    <property type="term" value="C:endoplasmic reticulum membrane"/>
    <property type="evidence" value="ECO:0000314"/>
    <property type="project" value="UniProtKB"/>
</dbReference>
<dbReference type="GO" id="GO:0140268">
    <property type="term" value="C:endoplasmic reticulum-plasma membrane contact site"/>
    <property type="evidence" value="ECO:0000314"/>
    <property type="project" value="UniProtKB"/>
</dbReference>
<dbReference type="GO" id="GO:0044232">
    <property type="term" value="C:organelle membrane contact site"/>
    <property type="evidence" value="ECO:0000314"/>
    <property type="project" value="UniProtKB"/>
</dbReference>
<dbReference type="GO" id="GO:0005886">
    <property type="term" value="C:plasma membrane"/>
    <property type="evidence" value="ECO:0000314"/>
    <property type="project" value="FlyBase"/>
</dbReference>
<dbReference type="GO" id="GO:0005509">
    <property type="term" value="F:calcium ion binding"/>
    <property type="evidence" value="ECO:0000318"/>
    <property type="project" value="GO_Central"/>
</dbReference>
<dbReference type="GO" id="GO:0005544">
    <property type="term" value="F:calcium-dependent phospholipid binding"/>
    <property type="evidence" value="ECO:0000318"/>
    <property type="project" value="GO_Central"/>
</dbReference>
<dbReference type="GO" id="GO:0031210">
    <property type="term" value="F:phosphatidylcholine binding"/>
    <property type="evidence" value="ECO:0000318"/>
    <property type="project" value="GO_Central"/>
</dbReference>
<dbReference type="GO" id="GO:0008429">
    <property type="term" value="F:phosphatidylethanolamine binding"/>
    <property type="evidence" value="ECO:0000318"/>
    <property type="project" value="GO_Central"/>
</dbReference>
<dbReference type="GO" id="GO:0035091">
    <property type="term" value="F:phosphatidylinositol binding"/>
    <property type="evidence" value="ECO:0000318"/>
    <property type="project" value="GO_Central"/>
</dbReference>
<dbReference type="GO" id="GO:0061817">
    <property type="term" value="P:endoplasmic reticulum-plasma membrane tethering"/>
    <property type="evidence" value="ECO:0007669"/>
    <property type="project" value="InterPro"/>
</dbReference>
<dbReference type="GO" id="GO:0006869">
    <property type="term" value="P:lipid transport"/>
    <property type="evidence" value="ECO:0007669"/>
    <property type="project" value="UniProtKB-KW"/>
</dbReference>
<dbReference type="CDD" id="cd08391">
    <property type="entry name" value="C2A_C2C_Synaptotagmin_like"/>
    <property type="match status" value="1"/>
</dbReference>
<dbReference type="CDD" id="cd04050">
    <property type="entry name" value="C2B_Synaptotagmin-like"/>
    <property type="match status" value="1"/>
</dbReference>
<dbReference type="CDD" id="cd04030">
    <property type="entry name" value="C2C_KIAA1228"/>
    <property type="match status" value="1"/>
</dbReference>
<dbReference type="CDD" id="cd21681">
    <property type="entry name" value="SMP_ESyt3"/>
    <property type="match status" value="1"/>
</dbReference>
<dbReference type="FunFam" id="2.60.40.150:FF:000025">
    <property type="entry name" value="Extended synaptotagmin 2"/>
    <property type="match status" value="1"/>
</dbReference>
<dbReference type="FunFam" id="2.60.40.150:FF:000093">
    <property type="entry name" value="Extended synaptotagmin 3"/>
    <property type="match status" value="1"/>
</dbReference>
<dbReference type="FunFam" id="2.60.40.150:FF:000114">
    <property type="entry name" value="Extended synaptotagmin 3"/>
    <property type="match status" value="1"/>
</dbReference>
<dbReference type="Gene3D" id="2.60.40.150">
    <property type="entry name" value="C2 domain"/>
    <property type="match status" value="3"/>
</dbReference>
<dbReference type="InterPro" id="IPR000008">
    <property type="entry name" value="C2_dom"/>
</dbReference>
<dbReference type="InterPro" id="IPR035892">
    <property type="entry name" value="C2_domain_sf"/>
</dbReference>
<dbReference type="InterPro" id="IPR037752">
    <property type="entry name" value="C2C_KIAA1228"/>
</dbReference>
<dbReference type="InterPro" id="IPR037733">
    <property type="entry name" value="Ext_Synaptotagmin_C2A"/>
</dbReference>
<dbReference type="InterPro" id="IPR037749">
    <property type="entry name" value="Ext_Synaptotagmin_C2B"/>
</dbReference>
<dbReference type="InterPro" id="IPR051634">
    <property type="entry name" value="Extended_Synaptotagmin"/>
</dbReference>
<dbReference type="InterPro" id="IPR031468">
    <property type="entry name" value="SMP_LBD"/>
</dbReference>
<dbReference type="InterPro" id="IPR039010">
    <property type="entry name" value="Synaptotagmin_SMP"/>
</dbReference>
<dbReference type="PANTHER" id="PTHR45761:SF4">
    <property type="entry name" value="EXTENDED SYNAPTOTAGMIN-3"/>
    <property type="match status" value="1"/>
</dbReference>
<dbReference type="PANTHER" id="PTHR45761">
    <property type="entry name" value="EXTENDED SYNAPTOTAGMIN-LIKE PROTEIN 2, ISOFORM C"/>
    <property type="match status" value="1"/>
</dbReference>
<dbReference type="Pfam" id="PF00168">
    <property type="entry name" value="C2"/>
    <property type="match status" value="3"/>
</dbReference>
<dbReference type="Pfam" id="PF17047">
    <property type="entry name" value="SMP_LBD"/>
    <property type="match status" value="1"/>
</dbReference>
<dbReference type="PRINTS" id="PR00360">
    <property type="entry name" value="C2DOMAIN"/>
</dbReference>
<dbReference type="SMART" id="SM00239">
    <property type="entry name" value="C2"/>
    <property type="match status" value="3"/>
</dbReference>
<dbReference type="SUPFAM" id="SSF49562">
    <property type="entry name" value="C2 domain (Calcium/lipid-binding domain, CaLB)"/>
    <property type="match status" value="3"/>
</dbReference>
<dbReference type="PROSITE" id="PS50004">
    <property type="entry name" value="C2"/>
    <property type="match status" value="3"/>
</dbReference>
<dbReference type="PROSITE" id="PS51847">
    <property type="entry name" value="SMP"/>
    <property type="match status" value="1"/>
</dbReference>
<feature type="chain" id="PRO_0000314899" description="Extended synaptotagmin-3">
    <location>
        <begin position="1"/>
        <end position="886"/>
    </location>
</feature>
<feature type="topological domain" description="Cytoplasmic" evidence="3">
    <location>
        <begin position="1"/>
        <end position="29"/>
    </location>
</feature>
<feature type="transmembrane region" description="Helical" evidence="3">
    <location>
        <begin position="30"/>
        <end position="50"/>
    </location>
</feature>
<feature type="transmembrane region" description="Helical" evidence="3">
    <location>
        <begin position="51"/>
        <end position="71"/>
    </location>
</feature>
<feature type="topological domain" description="Cytoplasmic" evidence="3">
    <location>
        <begin position="72"/>
        <end position="886"/>
    </location>
</feature>
<feature type="domain" description="SMP-LTD" evidence="5">
    <location>
        <begin position="114"/>
        <end position="291"/>
    </location>
</feature>
<feature type="domain" description="C2 1" evidence="4">
    <location>
        <begin position="291"/>
        <end position="408"/>
    </location>
</feature>
<feature type="domain" description="C2 2" evidence="4">
    <location>
        <begin position="426"/>
        <end position="566"/>
    </location>
</feature>
<feature type="domain" description="C2 3" evidence="4">
    <location>
        <begin position="754"/>
        <end position="876"/>
    </location>
</feature>
<feature type="region of interest" description="Disordered" evidence="6">
    <location>
        <begin position="1"/>
        <end position="21"/>
    </location>
</feature>
<feature type="region of interest" description="Disordered" evidence="6">
    <location>
        <begin position="613"/>
        <end position="673"/>
    </location>
</feature>
<feature type="region of interest" description="Required for phosphatidylinositol 4,5-bisphosphate-dependent location at the cell membrane" evidence="1">
    <location>
        <begin position="801"/>
        <end position="808"/>
    </location>
</feature>
<feature type="compositionally biased region" description="Low complexity" evidence="6">
    <location>
        <begin position="642"/>
        <end position="659"/>
    </location>
</feature>
<feature type="compositionally biased region" description="Basic and acidic residues" evidence="6">
    <location>
        <begin position="664"/>
        <end position="673"/>
    </location>
</feature>
<feature type="binding site" evidence="1">
    <location>
        <position position="321"/>
    </location>
    <ligand>
        <name>Ca(2+)</name>
        <dbReference type="ChEBI" id="CHEBI:29108"/>
        <label>1</label>
    </ligand>
</feature>
<feature type="binding site" evidence="1">
    <location>
        <position position="322"/>
    </location>
    <ligand>
        <name>Ca(2+)</name>
        <dbReference type="ChEBI" id="CHEBI:29108"/>
        <label>1</label>
    </ligand>
</feature>
<feature type="binding site" evidence="1">
    <location>
        <position position="322"/>
    </location>
    <ligand>
        <name>Ca(2+)</name>
        <dbReference type="ChEBI" id="CHEBI:29108"/>
        <label>2</label>
    </ligand>
</feature>
<feature type="binding site" evidence="1">
    <location>
        <position position="332"/>
    </location>
    <ligand>
        <name>Ca(2+)</name>
        <dbReference type="ChEBI" id="CHEBI:29108"/>
        <label>2</label>
    </ligand>
</feature>
<feature type="binding site" evidence="1">
    <location>
        <position position="379"/>
    </location>
    <ligand>
        <name>Ca(2+)</name>
        <dbReference type="ChEBI" id="CHEBI:29108"/>
        <label>1</label>
    </ligand>
</feature>
<feature type="binding site" evidence="1">
    <location>
        <position position="379"/>
    </location>
    <ligand>
        <name>Ca(2+)</name>
        <dbReference type="ChEBI" id="CHEBI:29108"/>
        <label>2</label>
    </ligand>
</feature>
<feature type="binding site" evidence="1">
    <location>
        <position position="380"/>
    </location>
    <ligand>
        <name>Ca(2+)</name>
        <dbReference type="ChEBI" id="CHEBI:29108"/>
        <label>2</label>
    </ligand>
</feature>
<feature type="binding site" evidence="1">
    <location>
        <position position="381"/>
    </location>
    <ligand>
        <name>Ca(2+)</name>
        <dbReference type="ChEBI" id="CHEBI:29108"/>
        <label>1</label>
    </ligand>
</feature>
<feature type="binding site" evidence="1">
    <location>
        <position position="381"/>
    </location>
    <ligand>
        <name>Ca(2+)</name>
        <dbReference type="ChEBI" id="CHEBI:29108"/>
        <label>2</label>
    </ligand>
</feature>
<feature type="binding site" evidence="1">
    <location>
        <position position="381"/>
    </location>
    <ligand>
        <name>Ca(2+)</name>
        <dbReference type="ChEBI" id="CHEBI:29108"/>
        <label>3</label>
    </ligand>
</feature>
<feature type="binding site" evidence="1">
    <location>
        <position position="383"/>
    </location>
    <ligand>
        <name>Ca(2+)</name>
        <dbReference type="ChEBI" id="CHEBI:29108"/>
        <label>3</label>
    </ligand>
</feature>
<feature type="binding site" evidence="1">
    <location>
        <position position="385"/>
    </location>
    <ligand>
        <name>Ca(2+)</name>
        <dbReference type="ChEBI" id="CHEBI:29108"/>
        <label>3</label>
    </ligand>
</feature>
<feature type="binding site" evidence="1">
    <location>
        <position position="386"/>
    </location>
    <ligand>
        <name>Ca(2+)</name>
        <dbReference type="ChEBI" id="CHEBI:29108"/>
        <label>1</label>
    </ligand>
</feature>
<feature type="splice variant" id="VSP_030424" description="In isoform 2." evidence="12 13">
    <original>NKVSKDPSSYVKLSVGKKTHTSK</original>
    <variation>VKQGQQRPFFLCQTICRQEDTYK</variation>
    <location>
        <begin position="479"/>
        <end position="501"/>
    </location>
</feature>
<feature type="splice variant" id="VSP_030425" description="In isoform 2." evidence="12 13">
    <location>
        <begin position="502"/>
        <end position="886"/>
    </location>
</feature>
<feature type="sequence variant" id="VAR_038117" description="In dbSNP:rs17857138." evidence="7">
    <original>P</original>
    <variation>Q</variation>
    <location>
        <position position="246"/>
    </location>
</feature>
<feature type="sequence variant" id="VAR_038118" description="In dbSNP:rs6772467.">
    <original>G</original>
    <variation>R</variation>
    <location>
        <position position="416"/>
    </location>
</feature>
<feature type="sequence variant" id="VAR_053835" description="In dbSNP:rs10935282.">
    <original>G</original>
    <variation>R</variation>
    <location>
        <position position="590"/>
    </location>
</feature>
<feature type="sequence variant" id="VAR_062173" description="In dbSNP:rs35537868.">
    <original>T</original>
    <variation>S</variation>
    <location>
        <position position="662"/>
    </location>
</feature>